<protein>
    <recommendedName>
        <fullName evidence="1">Peptide methionine sulfoxide reductase MsrB</fullName>
        <ecNumber evidence="1">1.8.4.12</ecNumber>
    </recommendedName>
    <alternativeName>
        <fullName evidence="1">Peptide-methionine (R)-S-oxide reductase</fullName>
    </alternativeName>
</protein>
<name>MSRB_PSEPF</name>
<feature type="chain" id="PRO_1000068288" description="Peptide methionine sulfoxide reductase MsrB">
    <location>
        <begin position="1"/>
        <end position="131"/>
    </location>
</feature>
<feature type="domain" description="MsrB" evidence="2">
    <location>
        <begin position="8"/>
        <end position="130"/>
    </location>
</feature>
<feature type="active site" description="Nucleophile" evidence="2">
    <location>
        <position position="119"/>
    </location>
</feature>
<feature type="binding site" evidence="2">
    <location>
        <position position="47"/>
    </location>
    <ligand>
        <name>Zn(2+)</name>
        <dbReference type="ChEBI" id="CHEBI:29105"/>
    </ligand>
</feature>
<feature type="binding site" evidence="2">
    <location>
        <position position="50"/>
    </location>
    <ligand>
        <name>Zn(2+)</name>
        <dbReference type="ChEBI" id="CHEBI:29105"/>
    </ligand>
</feature>
<feature type="binding site" evidence="2">
    <location>
        <position position="96"/>
    </location>
    <ligand>
        <name>Zn(2+)</name>
        <dbReference type="ChEBI" id="CHEBI:29105"/>
    </ligand>
</feature>
<feature type="binding site" evidence="2">
    <location>
        <position position="99"/>
    </location>
    <ligand>
        <name>Zn(2+)</name>
        <dbReference type="ChEBI" id="CHEBI:29105"/>
    </ligand>
</feature>
<reference key="1">
    <citation type="journal article" date="2009" name="Genome Biol.">
        <title>Genomic and genetic analyses of diversity and plant interactions of Pseudomonas fluorescens.</title>
        <authorList>
            <person name="Silby M.W."/>
            <person name="Cerdeno-Tarraga A.M."/>
            <person name="Vernikos G.S."/>
            <person name="Giddens S.R."/>
            <person name="Jackson R.W."/>
            <person name="Preston G.M."/>
            <person name="Zhang X.-X."/>
            <person name="Moon C.D."/>
            <person name="Gehrig S.M."/>
            <person name="Godfrey S.A.C."/>
            <person name="Knight C.G."/>
            <person name="Malone J.G."/>
            <person name="Robinson Z."/>
            <person name="Spiers A.J."/>
            <person name="Harris S."/>
            <person name="Challis G.L."/>
            <person name="Yaxley A.M."/>
            <person name="Harris D."/>
            <person name="Seeger K."/>
            <person name="Murphy L."/>
            <person name="Rutter S."/>
            <person name="Squares R."/>
            <person name="Quail M.A."/>
            <person name="Saunders E."/>
            <person name="Mavromatis K."/>
            <person name="Brettin T.S."/>
            <person name="Bentley S.D."/>
            <person name="Hothersall J."/>
            <person name="Stephens E."/>
            <person name="Thomas C.M."/>
            <person name="Parkhill J."/>
            <person name="Levy S.B."/>
            <person name="Rainey P.B."/>
            <person name="Thomson N.R."/>
        </authorList>
    </citation>
    <scope>NUCLEOTIDE SEQUENCE [LARGE SCALE GENOMIC DNA]</scope>
    <source>
        <strain>Pf0-1</strain>
    </source>
</reference>
<dbReference type="EC" id="1.8.4.12" evidence="1"/>
<dbReference type="EMBL" id="CP000094">
    <property type="protein sequence ID" value="ABA75719.1"/>
    <property type="molecule type" value="Genomic_DNA"/>
</dbReference>
<dbReference type="RefSeq" id="WP_011335291.1">
    <property type="nucleotide sequence ID" value="NC_007492.2"/>
</dbReference>
<dbReference type="SMR" id="Q3K935"/>
<dbReference type="KEGG" id="pfo:Pfl01_3982"/>
<dbReference type="eggNOG" id="COG0229">
    <property type="taxonomic scope" value="Bacteria"/>
</dbReference>
<dbReference type="HOGENOM" id="CLU_031040_8_5_6"/>
<dbReference type="Proteomes" id="UP000002704">
    <property type="component" value="Chromosome"/>
</dbReference>
<dbReference type="GO" id="GO:0005737">
    <property type="term" value="C:cytoplasm"/>
    <property type="evidence" value="ECO:0007669"/>
    <property type="project" value="TreeGrafter"/>
</dbReference>
<dbReference type="GO" id="GO:0033743">
    <property type="term" value="F:peptide-methionine (R)-S-oxide reductase activity"/>
    <property type="evidence" value="ECO:0007669"/>
    <property type="project" value="UniProtKB-UniRule"/>
</dbReference>
<dbReference type="GO" id="GO:0008270">
    <property type="term" value="F:zinc ion binding"/>
    <property type="evidence" value="ECO:0007669"/>
    <property type="project" value="UniProtKB-UniRule"/>
</dbReference>
<dbReference type="GO" id="GO:0030091">
    <property type="term" value="P:protein repair"/>
    <property type="evidence" value="ECO:0007669"/>
    <property type="project" value="InterPro"/>
</dbReference>
<dbReference type="GO" id="GO:0006979">
    <property type="term" value="P:response to oxidative stress"/>
    <property type="evidence" value="ECO:0007669"/>
    <property type="project" value="InterPro"/>
</dbReference>
<dbReference type="FunFam" id="2.170.150.20:FF:000001">
    <property type="entry name" value="Peptide methionine sulfoxide reductase MsrB"/>
    <property type="match status" value="1"/>
</dbReference>
<dbReference type="Gene3D" id="2.170.150.20">
    <property type="entry name" value="Peptide methionine sulfoxide reductase"/>
    <property type="match status" value="1"/>
</dbReference>
<dbReference type="HAMAP" id="MF_01400">
    <property type="entry name" value="MsrB"/>
    <property type="match status" value="1"/>
</dbReference>
<dbReference type="InterPro" id="IPR028427">
    <property type="entry name" value="Met_Sox_Rdtase_MsrB"/>
</dbReference>
<dbReference type="InterPro" id="IPR002579">
    <property type="entry name" value="Met_Sox_Rdtase_MsrB_dom"/>
</dbReference>
<dbReference type="InterPro" id="IPR011057">
    <property type="entry name" value="Mss4-like_sf"/>
</dbReference>
<dbReference type="NCBIfam" id="TIGR00357">
    <property type="entry name" value="peptide-methionine (R)-S-oxide reductase MsrB"/>
    <property type="match status" value="1"/>
</dbReference>
<dbReference type="PANTHER" id="PTHR10173">
    <property type="entry name" value="METHIONINE SULFOXIDE REDUCTASE"/>
    <property type="match status" value="1"/>
</dbReference>
<dbReference type="PANTHER" id="PTHR10173:SF52">
    <property type="entry name" value="METHIONINE-R-SULFOXIDE REDUCTASE B1"/>
    <property type="match status" value="1"/>
</dbReference>
<dbReference type="Pfam" id="PF01641">
    <property type="entry name" value="SelR"/>
    <property type="match status" value="1"/>
</dbReference>
<dbReference type="SUPFAM" id="SSF51316">
    <property type="entry name" value="Mss4-like"/>
    <property type="match status" value="1"/>
</dbReference>
<dbReference type="PROSITE" id="PS51790">
    <property type="entry name" value="MSRB"/>
    <property type="match status" value="1"/>
</dbReference>
<gene>
    <name evidence="1" type="primary">msrB</name>
    <name type="ordered locus">Pfl01_3982</name>
</gene>
<accession>Q3K935</accession>
<comment type="catalytic activity">
    <reaction evidence="1">
        <text>L-methionyl-[protein] + [thioredoxin]-disulfide + H2O = L-methionyl-(R)-S-oxide-[protein] + [thioredoxin]-dithiol</text>
        <dbReference type="Rhea" id="RHEA:24164"/>
        <dbReference type="Rhea" id="RHEA-COMP:10698"/>
        <dbReference type="Rhea" id="RHEA-COMP:10700"/>
        <dbReference type="Rhea" id="RHEA-COMP:12313"/>
        <dbReference type="Rhea" id="RHEA-COMP:12314"/>
        <dbReference type="ChEBI" id="CHEBI:15377"/>
        <dbReference type="ChEBI" id="CHEBI:16044"/>
        <dbReference type="ChEBI" id="CHEBI:29950"/>
        <dbReference type="ChEBI" id="CHEBI:45764"/>
        <dbReference type="ChEBI" id="CHEBI:50058"/>
        <dbReference type="EC" id="1.8.4.12"/>
    </reaction>
</comment>
<comment type="cofactor">
    <cofactor evidence="1">
        <name>Zn(2+)</name>
        <dbReference type="ChEBI" id="CHEBI:29105"/>
    </cofactor>
    <text evidence="1">Binds 1 zinc ion per subunit. The zinc ion is important for the structural integrity of the protein.</text>
</comment>
<comment type="similarity">
    <text evidence="1">Belongs to the MsrB Met sulfoxide reductase family.</text>
</comment>
<proteinExistence type="inferred from homology"/>
<organism>
    <name type="scientific">Pseudomonas fluorescens (strain Pf0-1)</name>
    <dbReference type="NCBI Taxonomy" id="205922"/>
    <lineage>
        <taxon>Bacteria</taxon>
        <taxon>Pseudomonadati</taxon>
        <taxon>Pseudomonadota</taxon>
        <taxon>Gammaproteobacteria</taxon>
        <taxon>Pseudomonadales</taxon>
        <taxon>Pseudomonadaceae</taxon>
        <taxon>Pseudomonas</taxon>
    </lineage>
</organism>
<keyword id="KW-0479">Metal-binding</keyword>
<keyword id="KW-0560">Oxidoreductase</keyword>
<keyword id="KW-0862">Zinc</keyword>
<sequence>MEKIEKTLEEWRAMLDPEQFNVCRLSATERPFSGKYNATKTDGVYHCICCNEPLFDSKTKFDSGCGWPSFYAPIGDNAMTEIRDTSHGMIRTEVKCAKCDAHLGHVFPDGPPPTGLRYCINSVCLDLVPRE</sequence>
<evidence type="ECO:0000255" key="1">
    <source>
        <dbReference type="HAMAP-Rule" id="MF_01400"/>
    </source>
</evidence>
<evidence type="ECO:0000255" key="2">
    <source>
        <dbReference type="PROSITE-ProRule" id="PRU01126"/>
    </source>
</evidence>